<sequence length="173" mass="20082">MGARVTRALRNFNVEKRAEREISKRKPSMAPKHPSTRDLLQEHRSQYPEIEEVVSKKDNKLLSLLRDVYVDSKDPVPALPVKVEPRQEPKEFRLPIGNHFDKNITDIPKGKITVVEALTLLNNHKLSPETWTAEKIAQEYYLELKDVNSLLKYFVTFEVKILPPEDRKAIQSK</sequence>
<accession>Q9D1H6</accession>
<accession>Q3TV72</accession>
<keyword id="KW-0112">Calmodulin-binding</keyword>
<keyword id="KW-0449">Lipoprotein</keyword>
<keyword id="KW-0472">Membrane</keyword>
<keyword id="KW-0496">Mitochondrion</keyword>
<keyword id="KW-0519">Myristate</keyword>
<keyword id="KW-0597">Phosphoprotein</keyword>
<keyword id="KW-1185">Reference proteome</keyword>
<organism>
    <name type="scientific">Mus musculus</name>
    <name type="common">Mouse</name>
    <dbReference type="NCBI Taxonomy" id="10090"/>
    <lineage>
        <taxon>Eukaryota</taxon>
        <taxon>Metazoa</taxon>
        <taxon>Chordata</taxon>
        <taxon>Craniata</taxon>
        <taxon>Vertebrata</taxon>
        <taxon>Euteleostomi</taxon>
        <taxon>Mammalia</taxon>
        <taxon>Eutheria</taxon>
        <taxon>Euarchontoglires</taxon>
        <taxon>Glires</taxon>
        <taxon>Rodentia</taxon>
        <taxon>Myomorpha</taxon>
        <taxon>Muroidea</taxon>
        <taxon>Muridae</taxon>
        <taxon>Murinae</taxon>
        <taxon>Mus</taxon>
        <taxon>Mus</taxon>
    </lineage>
</organism>
<protein>
    <recommendedName>
        <fullName>NADH dehydrogenase [ubiquinone] 1 alpha subcomplex assembly factor 4</fullName>
    </recommendedName>
    <alternativeName>
        <fullName>Hormone-regulated proliferation-associated protein of 20 kDa homolog</fullName>
    </alternativeName>
</protein>
<evidence type="ECO:0000250" key="1"/>
<evidence type="ECO:0000250" key="2">
    <source>
        <dbReference type="UniProtKB" id="Q9P032"/>
    </source>
</evidence>
<evidence type="ECO:0000256" key="3">
    <source>
        <dbReference type="SAM" id="MobiDB-lite"/>
    </source>
</evidence>
<evidence type="ECO:0000305" key="4"/>
<dbReference type="EMBL" id="AK003553">
    <property type="protein sequence ID" value="BAB22852.1"/>
    <property type="molecule type" value="mRNA"/>
</dbReference>
<dbReference type="EMBL" id="AK034728">
    <property type="protein sequence ID" value="BAC28809.1"/>
    <property type="molecule type" value="mRNA"/>
</dbReference>
<dbReference type="EMBL" id="AK160341">
    <property type="protein sequence ID" value="BAE35747.1"/>
    <property type="molecule type" value="mRNA"/>
</dbReference>
<dbReference type="EMBL" id="BC028764">
    <property type="protein sequence ID" value="AAH28764.1"/>
    <property type="molecule type" value="mRNA"/>
</dbReference>
<dbReference type="CCDS" id="CCDS18007.1"/>
<dbReference type="RefSeq" id="NP_081018.1">
    <property type="nucleotide sequence ID" value="NM_026742.4"/>
</dbReference>
<dbReference type="SMR" id="Q9D1H6"/>
<dbReference type="BioGRID" id="212884">
    <property type="interactions" value="2"/>
</dbReference>
<dbReference type="FunCoup" id="Q9D1H6">
    <property type="interactions" value="1391"/>
</dbReference>
<dbReference type="STRING" id="10090.ENSMUSP00000029925"/>
<dbReference type="iPTMnet" id="Q9D1H6"/>
<dbReference type="PhosphoSitePlus" id="Q9D1H6"/>
<dbReference type="jPOST" id="Q9D1H6"/>
<dbReference type="PaxDb" id="10090-ENSMUSP00000029925"/>
<dbReference type="PeptideAtlas" id="Q9D1H6"/>
<dbReference type="ProteomicsDB" id="252870"/>
<dbReference type="Pumba" id="Q9D1H6"/>
<dbReference type="Antibodypedia" id="48392">
    <property type="antibodies" value="123 antibodies from 27 providers"/>
</dbReference>
<dbReference type="DNASU" id="68493"/>
<dbReference type="Ensembl" id="ENSMUST00000029925.10">
    <property type="protein sequence ID" value="ENSMUSP00000029925.4"/>
    <property type="gene ID" value="ENSMUSG00000028261.14"/>
</dbReference>
<dbReference type="GeneID" id="68493"/>
<dbReference type="KEGG" id="mmu:68493"/>
<dbReference type="UCSC" id="uc008sed.2">
    <property type="organism name" value="mouse"/>
</dbReference>
<dbReference type="AGR" id="MGI:1915743"/>
<dbReference type="CTD" id="29078"/>
<dbReference type="MGI" id="MGI:1915743">
    <property type="gene designation" value="Ndufaf4"/>
</dbReference>
<dbReference type="VEuPathDB" id="HostDB:ENSMUSG00000028261"/>
<dbReference type="eggNOG" id="KOG4481">
    <property type="taxonomic scope" value="Eukaryota"/>
</dbReference>
<dbReference type="GeneTree" id="ENSGT00390000001627"/>
<dbReference type="HOGENOM" id="CLU_054693_2_0_1"/>
<dbReference type="InParanoid" id="Q9D1H6"/>
<dbReference type="OMA" id="IPDQKYK"/>
<dbReference type="OrthoDB" id="2434756at2759"/>
<dbReference type="PhylomeDB" id="Q9D1H6"/>
<dbReference type="TreeFam" id="TF323532"/>
<dbReference type="Reactome" id="R-MMU-6799198">
    <property type="pathway name" value="Complex I biogenesis"/>
</dbReference>
<dbReference type="BioGRID-ORCS" id="68493">
    <property type="hits" value="16 hits in 76 CRISPR screens"/>
</dbReference>
<dbReference type="ChiTaRS" id="Ndufaf4">
    <property type="organism name" value="mouse"/>
</dbReference>
<dbReference type="PRO" id="PR:Q9D1H6"/>
<dbReference type="Proteomes" id="UP000000589">
    <property type="component" value="Chromosome 4"/>
</dbReference>
<dbReference type="RNAct" id="Q9D1H6">
    <property type="molecule type" value="protein"/>
</dbReference>
<dbReference type="Bgee" id="ENSMUSG00000028261">
    <property type="expression patterns" value="Expressed in atrioventricular valve and 262 other cell types or tissues"/>
</dbReference>
<dbReference type="ExpressionAtlas" id="Q9D1H6">
    <property type="expression patterns" value="baseline and differential"/>
</dbReference>
<dbReference type="GO" id="GO:0005829">
    <property type="term" value="C:cytosol"/>
    <property type="evidence" value="ECO:0007669"/>
    <property type="project" value="Ensembl"/>
</dbReference>
<dbReference type="GO" id="GO:0031966">
    <property type="term" value="C:mitochondrial membrane"/>
    <property type="evidence" value="ECO:0007669"/>
    <property type="project" value="Ensembl"/>
</dbReference>
<dbReference type="GO" id="GO:0005739">
    <property type="term" value="C:mitochondrion"/>
    <property type="evidence" value="ECO:0007005"/>
    <property type="project" value="MGI"/>
</dbReference>
<dbReference type="GO" id="GO:0005516">
    <property type="term" value="F:calmodulin binding"/>
    <property type="evidence" value="ECO:0007669"/>
    <property type="project" value="UniProtKB-KW"/>
</dbReference>
<dbReference type="GO" id="GO:0051607">
    <property type="term" value="P:defense response to virus"/>
    <property type="evidence" value="ECO:0007669"/>
    <property type="project" value="Ensembl"/>
</dbReference>
<dbReference type="GO" id="GO:0032981">
    <property type="term" value="P:mitochondrial respiratory chain complex I assembly"/>
    <property type="evidence" value="ECO:0007669"/>
    <property type="project" value="Ensembl"/>
</dbReference>
<dbReference type="GO" id="GO:0010257">
    <property type="term" value="P:NADH dehydrogenase complex assembly"/>
    <property type="evidence" value="ECO:0000315"/>
    <property type="project" value="MGI"/>
</dbReference>
<dbReference type="InterPro" id="IPR009622">
    <property type="entry name" value="NDUFAF4"/>
</dbReference>
<dbReference type="PANTHER" id="PTHR13338:SF4">
    <property type="entry name" value="NADH DEHYDROGENASE [UBIQUINONE] 1 ALPHA SUBCOMPLEX ASSEMBLY FACTOR 4"/>
    <property type="match status" value="1"/>
</dbReference>
<dbReference type="PANTHER" id="PTHR13338">
    <property type="entry name" value="UPF0240 PROTEIN"/>
    <property type="match status" value="1"/>
</dbReference>
<dbReference type="Pfam" id="PF06784">
    <property type="entry name" value="UPF0240"/>
    <property type="match status" value="1"/>
</dbReference>
<comment type="function">
    <text evidence="1">May be involved in cell proliferation and survival of hormone-dependent tumor cells. Involved in the assembly of mitochondrial NADH:ubiquinone oxidoreductase complex (complex I) (By similarity).</text>
</comment>
<comment type="subunit">
    <text evidence="1">Binds calmodulin. Interacts with NDUFAF3.</text>
</comment>
<comment type="subcellular location">
    <subcellularLocation>
        <location evidence="1">Mitochondrion</location>
    </subcellularLocation>
    <subcellularLocation>
        <location evidence="2">Membrane</location>
        <topology evidence="2">Lipid-anchor</topology>
    </subcellularLocation>
</comment>
<comment type="PTM">
    <text evidence="1">Phosphorylated on serine. Prolactin stimulate serine phosphorylation (By similarity).</text>
</comment>
<comment type="similarity">
    <text evidence="4">Belongs to the NDUFAF4 family.</text>
</comment>
<proteinExistence type="evidence at protein level"/>
<feature type="initiator methionine" description="Removed" evidence="2">
    <location>
        <position position="1"/>
    </location>
</feature>
<feature type="chain" id="PRO_0000220989" description="NADH dehydrogenase [ubiquinone] 1 alpha subcomplex assembly factor 4">
    <location>
        <begin position="2"/>
        <end position="173"/>
    </location>
</feature>
<feature type="region of interest" description="Disordered" evidence="3">
    <location>
        <begin position="16"/>
        <end position="40"/>
    </location>
</feature>
<feature type="modified residue" description="Phosphoserine" evidence="2">
    <location>
        <position position="35"/>
    </location>
</feature>
<feature type="lipid moiety-binding region" description="N-myristoyl glycine" evidence="2">
    <location>
        <position position="2"/>
    </location>
</feature>
<gene>
    <name type="primary">Ndufaf4</name>
    <name type="synonym">Hrpap20</name>
</gene>
<reference key="1">
    <citation type="journal article" date="2005" name="Science">
        <title>The transcriptional landscape of the mammalian genome.</title>
        <authorList>
            <person name="Carninci P."/>
            <person name="Kasukawa T."/>
            <person name="Katayama S."/>
            <person name="Gough J."/>
            <person name="Frith M.C."/>
            <person name="Maeda N."/>
            <person name="Oyama R."/>
            <person name="Ravasi T."/>
            <person name="Lenhard B."/>
            <person name="Wells C."/>
            <person name="Kodzius R."/>
            <person name="Shimokawa K."/>
            <person name="Bajic V.B."/>
            <person name="Brenner S.E."/>
            <person name="Batalov S."/>
            <person name="Forrest A.R."/>
            <person name="Zavolan M."/>
            <person name="Davis M.J."/>
            <person name="Wilming L.G."/>
            <person name="Aidinis V."/>
            <person name="Allen J.E."/>
            <person name="Ambesi-Impiombato A."/>
            <person name="Apweiler R."/>
            <person name="Aturaliya R.N."/>
            <person name="Bailey T.L."/>
            <person name="Bansal M."/>
            <person name="Baxter L."/>
            <person name="Beisel K.W."/>
            <person name="Bersano T."/>
            <person name="Bono H."/>
            <person name="Chalk A.M."/>
            <person name="Chiu K.P."/>
            <person name="Choudhary V."/>
            <person name="Christoffels A."/>
            <person name="Clutterbuck D.R."/>
            <person name="Crowe M.L."/>
            <person name="Dalla E."/>
            <person name="Dalrymple B.P."/>
            <person name="de Bono B."/>
            <person name="Della Gatta G."/>
            <person name="di Bernardo D."/>
            <person name="Down T."/>
            <person name="Engstrom P."/>
            <person name="Fagiolini M."/>
            <person name="Faulkner G."/>
            <person name="Fletcher C.F."/>
            <person name="Fukushima T."/>
            <person name="Furuno M."/>
            <person name="Futaki S."/>
            <person name="Gariboldi M."/>
            <person name="Georgii-Hemming P."/>
            <person name="Gingeras T.R."/>
            <person name="Gojobori T."/>
            <person name="Green R.E."/>
            <person name="Gustincich S."/>
            <person name="Harbers M."/>
            <person name="Hayashi Y."/>
            <person name="Hensch T.K."/>
            <person name="Hirokawa N."/>
            <person name="Hill D."/>
            <person name="Huminiecki L."/>
            <person name="Iacono M."/>
            <person name="Ikeo K."/>
            <person name="Iwama A."/>
            <person name="Ishikawa T."/>
            <person name="Jakt M."/>
            <person name="Kanapin A."/>
            <person name="Katoh M."/>
            <person name="Kawasawa Y."/>
            <person name="Kelso J."/>
            <person name="Kitamura H."/>
            <person name="Kitano H."/>
            <person name="Kollias G."/>
            <person name="Krishnan S.P."/>
            <person name="Kruger A."/>
            <person name="Kummerfeld S.K."/>
            <person name="Kurochkin I.V."/>
            <person name="Lareau L.F."/>
            <person name="Lazarevic D."/>
            <person name="Lipovich L."/>
            <person name="Liu J."/>
            <person name="Liuni S."/>
            <person name="McWilliam S."/>
            <person name="Madan Babu M."/>
            <person name="Madera M."/>
            <person name="Marchionni L."/>
            <person name="Matsuda H."/>
            <person name="Matsuzawa S."/>
            <person name="Miki H."/>
            <person name="Mignone F."/>
            <person name="Miyake S."/>
            <person name="Morris K."/>
            <person name="Mottagui-Tabar S."/>
            <person name="Mulder N."/>
            <person name="Nakano N."/>
            <person name="Nakauchi H."/>
            <person name="Ng P."/>
            <person name="Nilsson R."/>
            <person name="Nishiguchi S."/>
            <person name="Nishikawa S."/>
            <person name="Nori F."/>
            <person name="Ohara O."/>
            <person name="Okazaki Y."/>
            <person name="Orlando V."/>
            <person name="Pang K.C."/>
            <person name="Pavan W.J."/>
            <person name="Pavesi G."/>
            <person name="Pesole G."/>
            <person name="Petrovsky N."/>
            <person name="Piazza S."/>
            <person name="Reed J."/>
            <person name="Reid J.F."/>
            <person name="Ring B.Z."/>
            <person name="Ringwald M."/>
            <person name="Rost B."/>
            <person name="Ruan Y."/>
            <person name="Salzberg S.L."/>
            <person name="Sandelin A."/>
            <person name="Schneider C."/>
            <person name="Schoenbach C."/>
            <person name="Sekiguchi K."/>
            <person name="Semple C.A."/>
            <person name="Seno S."/>
            <person name="Sessa L."/>
            <person name="Sheng Y."/>
            <person name="Shibata Y."/>
            <person name="Shimada H."/>
            <person name="Shimada K."/>
            <person name="Silva D."/>
            <person name="Sinclair B."/>
            <person name="Sperling S."/>
            <person name="Stupka E."/>
            <person name="Sugiura K."/>
            <person name="Sultana R."/>
            <person name="Takenaka Y."/>
            <person name="Taki K."/>
            <person name="Tammoja K."/>
            <person name="Tan S.L."/>
            <person name="Tang S."/>
            <person name="Taylor M.S."/>
            <person name="Tegner J."/>
            <person name="Teichmann S.A."/>
            <person name="Ueda H.R."/>
            <person name="van Nimwegen E."/>
            <person name="Verardo R."/>
            <person name="Wei C.L."/>
            <person name="Yagi K."/>
            <person name="Yamanishi H."/>
            <person name="Zabarovsky E."/>
            <person name="Zhu S."/>
            <person name="Zimmer A."/>
            <person name="Hide W."/>
            <person name="Bult C."/>
            <person name="Grimmond S.M."/>
            <person name="Teasdale R.D."/>
            <person name="Liu E.T."/>
            <person name="Brusic V."/>
            <person name="Quackenbush J."/>
            <person name="Wahlestedt C."/>
            <person name="Mattick J.S."/>
            <person name="Hume D.A."/>
            <person name="Kai C."/>
            <person name="Sasaki D."/>
            <person name="Tomaru Y."/>
            <person name="Fukuda S."/>
            <person name="Kanamori-Katayama M."/>
            <person name="Suzuki M."/>
            <person name="Aoki J."/>
            <person name="Arakawa T."/>
            <person name="Iida J."/>
            <person name="Imamura K."/>
            <person name="Itoh M."/>
            <person name="Kato T."/>
            <person name="Kawaji H."/>
            <person name="Kawagashira N."/>
            <person name="Kawashima T."/>
            <person name="Kojima M."/>
            <person name="Kondo S."/>
            <person name="Konno H."/>
            <person name="Nakano K."/>
            <person name="Ninomiya N."/>
            <person name="Nishio T."/>
            <person name="Okada M."/>
            <person name="Plessy C."/>
            <person name="Shibata K."/>
            <person name="Shiraki T."/>
            <person name="Suzuki S."/>
            <person name="Tagami M."/>
            <person name="Waki K."/>
            <person name="Watahiki A."/>
            <person name="Okamura-Oho Y."/>
            <person name="Suzuki H."/>
            <person name="Kawai J."/>
            <person name="Hayashizaki Y."/>
        </authorList>
    </citation>
    <scope>NUCLEOTIDE SEQUENCE [LARGE SCALE MRNA]</scope>
    <source>
        <strain>C57BL/6J</strain>
        <tissue>Embryo</tissue>
        <tissue>Urinary bladder</tissue>
    </source>
</reference>
<reference key="2">
    <citation type="journal article" date="2004" name="Genome Res.">
        <title>The status, quality, and expansion of the NIH full-length cDNA project: the Mammalian Gene Collection (MGC).</title>
        <authorList>
            <consortium name="The MGC Project Team"/>
        </authorList>
    </citation>
    <scope>NUCLEOTIDE SEQUENCE [LARGE SCALE MRNA]</scope>
    <source>
        <tissue>Mammary gland</tissue>
    </source>
</reference>
<reference key="3">
    <citation type="journal article" date="2010" name="Cell">
        <title>A tissue-specific atlas of mouse protein phosphorylation and expression.</title>
        <authorList>
            <person name="Huttlin E.L."/>
            <person name="Jedrychowski M.P."/>
            <person name="Elias J.E."/>
            <person name="Goswami T."/>
            <person name="Rad R."/>
            <person name="Beausoleil S.A."/>
            <person name="Villen J."/>
            <person name="Haas W."/>
            <person name="Sowa M.E."/>
            <person name="Gygi S.P."/>
        </authorList>
    </citation>
    <scope>IDENTIFICATION BY MASS SPECTROMETRY [LARGE SCALE ANALYSIS]</scope>
    <source>
        <tissue>Brain</tissue>
        <tissue>Brown adipose tissue</tissue>
        <tissue>Heart</tissue>
        <tissue>Kidney</tissue>
        <tissue>Liver</tissue>
        <tissue>Lung</tissue>
        <tissue>Pancreas</tissue>
        <tissue>Spleen</tissue>
        <tissue>Testis</tissue>
    </source>
</reference>
<name>NDUF4_MOUSE</name>